<proteinExistence type="evidence at protein level"/>
<name>GSFR1_PENAE</name>
<reference key="1">
    <citation type="journal article" date="2010" name="Chem. Biol.">
        <title>Identification of the viridicatumtoxin and griseofulvin gene clusters from Penicillium aethiopicum.</title>
        <authorList>
            <person name="Chooi Y.H."/>
            <person name="Cacho R."/>
            <person name="Tang Y."/>
        </authorList>
    </citation>
    <scope>NUCLEOTIDE SEQUENCE [GENOMIC DNA]</scope>
    <scope>FUNCTION</scope>
    <source>
        <strain>IBT 5753</strain>
    </source>
</reference>
<reference key="2">
    <citation type="journal article" date="1958" name="Nature">
        <title>Experimental ringworm in guinea pigs: oral treatment with griseofulvin.</title>
        <authorList>
            <person name="Gentles J.C."/>
        </authorList>
    </citation>
    <scope>BIOTECHNOLOGY</scope>
</reference>
<reference key="3">
    <citation type="journal article" date="1973" name="Nature">
        <title>Griseofulvin inhibits fungal mitosis.</title>
        <authorList>
            <person name="Gull K."/>
            <person name="Trinci A.P."/>
        </authorList>
    </citation>
    <scope>BIOTECHNOLOGY</scope>
</reference>
<reference key="4">
    <citation type="journal article" date="2013" name="ACS Chem. Biol.">
        <title>Complexity generation in fungal polyketide biosynthesis: a spirocycle-forming P450 in the concise pathway to the antifungal drug griseofulvin.</title>
        <authorList>
            <person name="Cacho R.A."/>
            <person name="Chooi Y.H."/>
            <person name="Zhou H."/>
            <person name="Tang Y."/>
        </authorList>
    </citation>
    <scope>FUNCTION</scope>
</reference>
<gene>
    <name evidence="5" type="primary">gsfR1</name>
</gene>
<keyword id="KW-0539">Nucleus</keyword>
<keyword id="KW-0804">Transcription</keyword>
<keyword id="KW-0805">Transcription regulation</keyword>
<sequence>MSDGPETAEGDTDDAVQDAAVNSRVASESSARSQPRATVVGCLPPTPFAIHTTPAPSEHSKEKNVSRRLPTEKTPSRLATPQFPPTPVSSRGSIAEPSAYPSITQALRSCLPPQKDIEILLSNLSSMSIFCYKSSFKLCSSWPSEMTEEQIPIANLLYSETHPVLLARHMLLFAVGLQHLSPTKAIPGLTRHHRAIMEQLADSAIKLVNTDDVLLGTLEGLENLILESFYHIDGGNIRRAWITMRRAVMTAQLLGLHRPGHYRFKTVNKQNDLDPAVMWACIVSTEQFLCLLLGLPTSTSGASFTIPRATSACVESGNLPVLIPDVVRKIIERNQTHVPQEALDMTQKIDHELLGVVKQWPPAFWRPLQLSGLEVDSADAFWETRRAWDHIFYYSLVNQLHLPYMLNPSHVSQKVYSRIACASASREILIRQIAIRTFNPVTAGCRMGDFVALIAGMTLMLAHILSHCSKGTENLLVHQRVGDRATVERALECMESMSEQHEDILTAKCAALLKNLLDIEAGPAEARSDDGQKDDQNVLVVKVPHVGAIKIARDGISITPFDTEQEQVSHDGVTIGGFGSIHVSTPHDSDRDGDHQADVVTPNDTASQATTQVVRPASARKQWRPVSQRSSGDVFTLPEETFPDASAGMEEWLFQGLDTAFFDVLISGAGEQPLNSTDTEGWNFVMSP</sequence>
<evidence type="ECO:0000256" key="1">
    <source>
        <dbReference type="SAM" id="MobiDB-lite"/>
    </source>
</evidence>
<evidence type="ECO:0000269" key="2">
    <source>
    </source>
</evidence>
<evidence type="ECO:0000269" key="3">
    <source>
    </source>
</evidence>
<evidence type="ECO:0000269" key="4">
    <source>
    </source>
</evidence>
<evidence type="ECO:0000303" key="5">
    <source>
    </source>
</evidence>
<evidence type="ECO:0000305" key="6"/>
<feature type="chain" id="PRO_0000436727" description="Probable transcription factor gsfR1">
    <location>
        <begin position="1"/>
        <end position="688"/>
    </location>
</feature>
<feature type="region of interest" description="Disordered" evidence="1">
    <location>
        <begin position="1"/>
        <end position="95"/>
    </location>
</feature>
<feature type="compositionally biased region" description="Acidic residues" evidence="1">
    <location>
        <begin position="1"/>
        <end position="16"/>
    </location>
</feature>
<feature type="compositionally biased region" description="Polar residues" evidence="1">
    <location>
        <begin position="24"/>
        <end position="36"/>
    </location>
</feature>
<feature type="compositionally biased region" description="Basic and acidic residues" evidence="1">
    <location>
        <begin position="58"/>
        <end position="75"/>
    </location>
</feature>
<comment type="function">
    <text evidence="3">Probable transcription factor that regulates expression of the gene cluster that mediates the biosynthesis of Griseofulvin, an important antifungal drug that has been in use for a long time for treating dermatophyte infections (PubMed:20534346).</text>
</comment>
<comment type="subcellular location">
    <subcellularLocation>
        <location evidence="6">Nucleus</location>
    </subcellularLocation>
</comment>
<comment type="biotechnology">
    <text evidence="2 4">Griseofulvin is a spirocyclic fungal natural product used in treatment of fungal dermatophytes (PubMed:13577889, PubMed:4583105).</text>
</comment>
<comment type="caution">
    <text evidence="6">The Zn(2)-C6 fungal-type DNA-binding domain is highly degenerated, the transcriptional regulation activity of gsfR1 is therefore doubtful.</text>
</comment>
<organism>
    <name type="scientific">Penicillium aethiopicum</name>
    <dbReference type="NCBI Taxonomy" id="36650"/>
    <lineage>
        <taxon>Eukaryota</taxon>
        <taxon>Fungi</taxon>
        <taxon>Dikarya</taxon>
        <taxon>Ascomycota</taxon>
        <taxon>Pezizomycotina</taxon>
        <taxon>Eurotiomycetes</taxon>
        <taxon>Eurotiomycetidae</taxon>
        <taxon>Eurotiales</taxon>
        <taxon>Aspergillaceae</taxon>
        <taxon>Penicillium</taxon>
    </lineage>
</organism>
<dbReference type="EMBL" id="GU574478">
    <property type="protein sequence ID" value="ADI24950.1"/>
    <property type="molecule type" value="Genomic_DNA"/>
</dbReference>
<dbReference type="GO" id="GO:0005634">
    <property type="term" value="C:nucleus"/>
    <property type="evidence" value="ECO:0007669"/>
    <property type="project" value="UniProtKB-SubCell"/>
</dbReference>
<dbReference type="GO" id="GO:0003677">
    <property type="term" value="F:DNA binding"/>
    <property type="evidence" value="ECO:0007669"/>
    <property type="project" value="InterPro"/>
</dbReference>
<dbReference type="GO" id="GO:0008270">
    <property type="term" value="F:zinc ion binding"/>
    <property type="evidence" value="ECO:0007669"/>
    <property type="project" value="InterPro"/>
</dbReference>
<dbReference type="GO" id="GO:0006351">
    <property type="term" value="P:DNA-templated transcription"/>
    <property type="evidence" value="ECO:0007669"/>
    <property type="project" value="InterPro"/>
</dbReference>
<dbReference type="CDD" id="cd12148">
    <property type="entry name" value="fungal_TF_MHR"/>
    <property type="match status" value="1"/>
</dbReference>
<dbReference type="InterPro" id="IPR007219">
    <property type="entry name" value="Transcription_factor_dom_fun"/>
</dbReference>
<dbReference type="PANTHER" id="PTHR47840:SF1">
    <property type="entry name" value="ZN(II)2CYS6 TRANSCRIPTION FACTOR (EUROFUNG)"/>
    <property type="match status" value="1"/>
</dbReference>
<dbReference type="PANTHER" id="PTHR47840">
    <property type="entry name" value="ZN(II)2CYS6 TRANSCRIPTION FACTOR (EUROFUNG)-RELATED"/>
    <property type="match status" value="1"/>
</dbReference>
<dbReference type="SMART" id="SM00906">
    <property type="entry name" value="Fungal_trans"/>
    <property type="match status" value="1"/>
</dbReference>
<accession>D7PI12</accession>
<protein>
    <recommendedName>
        <fullName evidence="5">Probable transcription factor gsfR1</fullName>
    </recommendedName>
    <alternativeName>
        <fullName evidence="5">Griseofulvin synthesis protein R1</fullName>
    </alternativeName>
</protein>